<name>PYRH_XANCP</name>
<proteinExistence type="evidence at protein level"/>
<protein>
    <recommendedName>
        <fullName evidence="1">Uridylate kinase</fullName>
        <shortName evidence="1">UK</shortName>
        <ecNumber evidence="1">2.7.4.22</ecNumber>
    </recommendedName>
    <alternativeName>
        <fullName evidence="1">Uridine monophosphate kinase</fullName>
        <shortName evidence="1">UMP kinase</shortName>
        <shortName evidence="1">UMPK</shortName>
    </alternativeName>
</protein>
<dbReference type="EC" id="2.7.4.22" evidence="1"/>
<dbReference type="EMBL" id="AE008922">
    <property type="protein sequence ID" value="AAM40669.1"/>
    <property type="molecule type" value="Genomic_DNA"/>
</dbReference>
<dbReference type="RefSeq" id="NP_636745.1">
    <property type="nucleotide sequence ID" value="NC_003902.1"/>
</dbReference>
<dbReference type="RefSeq" id="WP_011036563.1">
    <property type="nucleotide sequence ID" value="NC_003902.1"/>
</dbReference>
<dbReference type="PDB" id="3EK5">
    <property type="method" value="X-ray"/>
    <property type="resolution" value="2.56 A"/>
    <property type="chains" value="A/B/C/D/E/F=1-240"/>
</dbReference>
<dbReference type="PDB" id="3EK6">
    <property type="method" value="X-ray"/>
    <property type="resolution" value="2.34 A"/>
    <property type="chains" value="A/B/C/D/E/F=1-240"/>
</dbReference>
<dbReference type="PDBsum" id="3EK5"/>
<dbReference type="PDBsum" id="3EK6"/>
<dbReference type="SMR" id="P59009"/>
<dbReference type="STRING" id="190485.XCC1371"/>
<dbReference type="EnsemblBacteria" id="AAM40669">
    <property type="protein sequence ID" value="AAM40669"/>
    <property type="gene ID" value="XCC1371"/>
</dbReference>
<dbReference type="KEGG" id="xcc:XCC1371"/>
<dbReference type="PATRIC" id="fig|190485.4.peg.1473"/>
<dbReference type="eggNOG" id="COG0528">
    <property type="taxonomic scope" value="Bacteria"/>
</dbReference>
<dbReference type="HOGENOM" id="CLU_033861_0_0_6"/>
<dbReference type="OrthoDB" id="9807458at2"/>
<dbReference type="UniPathway" id="UPA00159">
    <property type="reaction ID" value="UER00275"/>
</dbReference>
<dbReference type="EvolutionaryTrace" id="P59009"/>
<dbReference type="Proteomes" id="UP000001010">
    <property type="component" value="Chromosome"/>
</dbReference>
<dbReference type="GO" id="GO:0005829">
    <property type="term" value="C:cytosol"/>
    <property type="evidence" value="ECO:0000318"/>
    <property type="project" value="GO_Central"/>
</dbReference>
<dbReference type="GO" id="GO:0005524">
    <property type="term" value="F:ATP binding"/>
    <property type="evidence" value="ECO:0007669"/>
    <property type="project" value="UniProtKB-KW"/>
</dbReference>
<dbReference type="GO" id="GO:0033862">
    <property type="term" value="F:UMP kinase activity"/>
    <property type="evidence" value="ECO:0000318"/>
    <property type="project" value="GO_Central"/>
</dbReference>
<dbReference type="GO" id="GO:0044210">
    <property type="term" value="P:'de novo' CTP biosynthetic process"/>
    <property type="evidence" value="ECO:0007669"/>
    <property type="project" value="UniProtKB-UniRule"/>
</dbReference>
<dbReference type="GO" id="GO:0006225">
    <property type="term" value="P:UDP biosynthetic process"/>
    <property type="evidence" value="ECO:0000318"/>
    <property type="project" value="GO_Central"/>
</dbReference>
<dbReference type="CDD" id="cd04254">
    <property type="entry name" value="AAK_UMPK-PyrH-Ec"/>
    <property type="match status" value="1"/>
</dbReference>
<dbReference type="FunFam" id="3.40.1160.10:FF:000001">
    <property type="entry name" value="Uridylate kinase"/>
    <property type="match status" value="1"/>
</dbReference>
<dbReference type="Gene3D" id="3.40.1160.10">
    <property type="entry name" value="Acetylglutamate kinase-like"/>
    <property type="match status" value="1"/>
</dbReference>
<dbReference type="HAMAP" id="MF_01220_B">
    <property type="entry name" value="PyrH_B"/>
    <property type="match status" value="1"/>
</dbReference>
<dbReference type="InterPro" id="IPR036393">
    <property type="entry name" value="AceGlu_kinase-like_sf"/>
</dbReference>
<dbReference type="InterPro" id="IPR001048">
    <property type="entry name" value="Asp/Glu/Uridylate_kinase"/>
</dbReference>
<dbReference type="InterPro" id="IPR011817">
    <property type="entry name" value="Uridylate_kinase"/>
</dbReference>
<dbReference type="InterPro" id="IPR015963">
    <property type="entry name" value="Uridylate_kinase_bac"/>
</dbReference>
<dbReference type="NCBIfam" id="TIGR02075">
    <property type="entry name" value="pyrH_bact"/>
    <property type="match status" value="1"/>
</dbReference>
<dbReference type="PANTHER" id="PTHR42833">
    <property type="entry name" value="URIDYLATE KINASE"/>
    <property type="match status" value="1"/>
</dbReference>
<dbReference type="PANTHER" id="PTHR42833:SF4">
    <property type="entry name" value="URIDYLATE KINASE PUMPKIN, CHLOROPLASTIC"/>
    <property type="match status" value="1"/>
</dbReference>
<dbReference type="Pfam" id="PF00696">
    <property type="entry name" value="AA_kinase"/>
    <property type="match status" value="1"/>
</dbReference>
<dbReference type="PIRSF" id="PIRSF005650">
    <property type="entry name" value="Uridylate_kin"/>
    <property type="match status" value="1"/>
</dbReference>
<dbReference type="SUPFAM" id="SSF53633">
    <property type="entry name" value="Carbamate kinase-like"/>
    <property type="match status" value="1"/>
</dbReference>
<gene>
    <name evidence="1" type="primary">pyrH</name>
    <name type="ordered locus">XCC1371</name>
</gene>
<keyword id="KW-0002">3D-structure</keyword>
<keyword id="KW-0067">ATP-binding</keyword>
<keyword id="KW-0963">Cytoplasm</keyword>
<keyword id="KW-0418">Kinase</keyword>
<keyword id="KW-0547">Nucleotide-binding</keyword>
<keyword id="KW-0665">Pyrimidine biosynthesis</keyword>
<keyword id="KW-1185">Reference proteome</keyword>
<keyword id="KW-0808">Transferase</keyword>
<sequence length="240" mass="25752">MSELSYRRILLKLSGEALMGDGDYGIDPKVINRLAHEVIEAQQAGAQVALVIGGGNIFRGAGLAASGMDRVTGDHMGMLATVINALAMQDALEKLGAKVRVMSAIKINDVCEDFIRRRAIRHLEKGRIAIFAAGTGNPFFTTDSGAALRAIEIGADLLLKATKVDGVYDKDPKKHSDAVRYDSLTYDEVIMQGLEVMDTAAFALARDSDLPLRIFGMSEPGVLLRILHGAQIGTLVQGRS</sequence>
<reference key="1">
    <citation type="journal article" date="2002" name="Nature">
        <title>Comparison of the genomes of two Xanthomonas pathogens with differing host specificities.</title>
        <authorList>
            <person name="da Silva A.C.R."/>
            <person name="Ferro J.A."/>
            <person name="Reinach F.C."/>
            <person name="Farah C.S."/>
            <person name="Furlan L.R."/>
            <person name="Quaggio R.B."/>
            <person name="Monteiro-Vitorello C.B."/>
            <person name="Van Sluys M.A."/>
            <person name="Almeida N.F. Jr."/>
            <person name="Alves L.M.C."/>
            <person name="do Amaral A.M."/>
            <person name="Bertolini M.C."/>
            <person name="Camargo L.E.A."/>
            <person name="Camarotte G."/>
            <person name="Cannavan F."/>
            <person name="Cardozo J."/>
            <person name="Chambergo F."/>
            <person name="Ciapina L.P."/>
            <person name="Cicarelli R.M.B."/>
            <person name="Coutinho L.L."/>
            <person name="Cursino-Santos J.R."/>
            <person name="El-Dorry H."/>
            <person name="Faria J.B."/>
            <person name="Ferreira A.J.S."/>
            <person name="Ferreira R.C.C."/>
            <person name="Ferro M.I.T."/>
            <person name="Formighieri E.F."/>
            <person name="Franco M.C."/>
            <person name="Greggio C.C."/>
            <person name="Gruber A."/>
            <person name="Katsuyama A.M."/>
            <person name="Kishi L.T."/>
            <person name="Leite R.P."/>
            <person name="Lemos E.G.M."/>
            <person name="Lemos M.V.F."/>
            <person name="Locali E.C."/>
            <person name="Machado M.A."/>
            <person name="Madeira A.M.B.N."/>
            <person name="Martinez-Rossi N.M."/>
            <person name="Martins E.C."/>
            <person name="Meidanis J."/>
            <person name="Menck C.F.M."/>
            <person name="Miyaki C.Y."/>
            <person name="Moon D.H."/>
            <person name="Moreira L.M."/>
            <person name="Novo M.T.M."/>
            <person name="Okura V.K."/>
            <person name="Oliveira M.C."/>
            <person name="Oliveira V.R."/>
            <person name="Pereira H.A."/>
            <person name="Rossi A."/>
            <person name="Sena J.A.D."/>
            <person name="Silva C."/>
            <person name="de Souza R.F."/>
            <person name="Spinola L.A.F."/>
            <person name="Takita M.A."/>
            <person name="Tamura R.E."/>
            <person name="Teixeira E.C."/>
            <person name="Tezza R.I.D."/>
            <person name="Trindade dos Santos M."/>
            <person name="Truffi D."/>
            <person name="Tsai S.M."/>
            <person name="White F.F."/>
            <person name="Setubal J.C."/>
            <person name="Kitajima J.P."/>
        </authorList>
    </citation>
    <scope>NUCLEOTIDE SEQUENCE [LARGE SCALE GENOMIC DNA]</scope>
    <source>
        <strain>ATCC 33913 / DSM 3586 / NCPPB 528 / LMG 568 / P 25</strain>
    </source>
</reference>
<evidence type="ECO:0000255" key="1">
    <source>
        <dbReference type="HAMAP-Rule" id="MF_01220"/>
    </source>
</evidence>
<evidence type="ECO:0007829" key="2">
    <source>
        <dbReference type="PDB" id="3EK6"/>
    </source>
</evidence>
<accession>P59009</accession>
<organism>
    <name type="scientific">Xanthomonas campestris pv. campestris (strain ATCC 33913 / DSM 3586 / NCPPB 528 / LMG 568 / P 25)</name>
    <dbReference type="NCBI Taxonomy" id="190485"/>
    <lineage>
        <taxon>Bacteria</taxon>
        <taxon>Pseudomonadati</taxon>
        <taxon>Pseudomonadota</taxon>
        <taxon>Gammaproteobacteria</taxon>
        <taxon>Lysobacterales</taxon>
        <taxon>Lysobacteraceae</taxon>
        <taxon>Xanthomonas</taxon>
    </lineage>
</organism>
<feature type="chain" id="PRO_0000143908" description="Uridylate kinase">
    <location>
        <begin position="1"/>
        <end position="240"/>
    </location>
</feature>
<feature type="binding site" evidence="1">
    <location>
        <begin position="12"/>
        <end position="15"/>
    </location>
    <ligand>
        <name>ATP</name>
        <dbReference type="ChEBI" id="CHEBI:30616"/>
    </ligand>
</feature>
<feature type="binding site" evidence="1">
    <location>
        <position position="54"/>
    </location>
    <ligand>
        <name>UMP</name>
        <dbReference type="ChEBI" id="CHEBI:57865"/>
    </ligand>
</feature>
<feature type="binding site" evidence="1">
    <location>
        <position position="55"/>
    </location>
    <ligand>
        <name>ATP</name>
        <dbReference type="ChEBI" id="CHEBI:30616"/>
    </ligand>
</feature>
<feature type="binding site" evidence="1">
    <location>
        <position position="59"/>
    </location>
    <ligand>
        <name>ATP</name>
        <dbReference type="ChEBI" id="CHEBI:30616"/>
    </ligand>
</feature>
<feature type="binding site" evidence="1">
    <location>
        <position position="74"/>
    </location>
    <ligand>
        <name>UMP</name>
        <dbReference type="ChEBI" id="CHEBI:57865"/>
    </ligand>
</feature>
<feature type="binding site" evidence="1">
    <location>
        <begin position="135"/>
        <end position="142"/>
    </location>
    <ligand>
        <name>UMP</name>
        <dbReference type="ChEBI" id="CHEBI:57865"/>
    </ligand>
</feature>
<feature type="binding site" evidence="1">
    <location>
        <position position="162"/>
    </location>
    <ligand>
        <name>ATP</name>
        <dbReference type="ChEBI" id="CHEBI:30616"/>
    </ligand>
</feature>
<feature type="binding site" evidence="1">
    <location>
        <position position="168"/>
    </location>
    <ligand>
        <name>ATP</name>
        <dbReference type="ChEBI" id="CHEBI:30616"/>
    </ligand>
</feature>
<feature type="binding site" evidence="1">
    <location>
        <position position="171"/>
    </location>
    <ligand>
        <name>ATP</name>
        <dbReference type="ChEBI" id="CHEBI:30616"/>
    </ligand>
</feature>
<feature type="helix" evidence="2">
    <location>
        <begin position="1"/>
        <end position="3"/>
    </location>
</feature>
<feature type="strand" evidence="2">
    <location>
        <begin position="7"/>
        <end position="13"/>
    </location>
</feature>
<feature type="helix" evidence="2">
    <location>
        <begin position="15"/>
        <end position="18"/>
    </location>
</feature>
<feature type="turn" evidence="2">
    <location>
        <begin position="19"/>
        <end position="21"/>
    </location>
</feature>
<feature type="strand" evidence="2">
    <location>
        <begin position="22"/>
        <end position="25"/>
    </location>
</feature>
<feature type="helix" evidence="2">
    <location>
        <begin position="28"/>
        <end position="43"/>
    </location>
</feature>
<feature type="strand" evidence="2">
    <location>
        <begin position="47"/>
        <end position="52"/>
    </location>
</feature>
<feature type="turn" evidence="2">
    <location>
        <begin position="55"/>
        <end position="57"/>
    </location>
</feature>
<feature type="turn" evidence="2">
    <location>
        <begin position="61"/>
        <end position="63"/>
    </location>
</feature>
<feature type="strand" evidence="2">
    <location>
        <begin position="66"/>
        <end position="68"/>
    </location>
</feature>
<feature type="helix" evidence="2">
    <location>
        <begin position="70"/>
        <end position="94"/>
    </location>
</feature>
<feature type="strand" evidence="2">
    <location>
        <begin position="99"/>
        <end position="105"/>
    </location>
</feature>
<feature type="turn" evidence="2">
    <location>
        <begin position="108"/>
        <end position="110"/>
    </location>
</feature>
<feature type="strand" evidence="2">
    <location>
        <begin position="111"/>
        <end position="113"/>
    </location>
</feature>
<feature type="helix" evidence="2">
    <location>
        <begin position="116"/>
        <end position="124"/>
    </location>
</feature>
<feature type="strand" evidence="2">
    <location>
        <begin position="128"/>
        <end position="133"/>
    </location>
</feature>
<feature type="helix" evidence="2">
    <location>
        <begin position="142"/>
        <end position="153"/>
    </location>
</feature>
<feature type="strand" evidence="2">
    <location>
        <begin position="156"/>
        <end position="161"/>
    </location>
</feature>
<feature type="strand" evidence="2">
    <location>
        <begin position="163"/>
        <end position="166"/>
    </location>
</feature>
<feature type="strand" evidence="2">
    <location>
        <begin position="168"/>
        <end position="170"/>
    </location>
</feature>
<feature type="helix" evidence="2">
    <location>
        <begin position="172"/>
        <end position="174"/>
    </location>
</feature>
<feature type="strand" evidence="2">
    <location>
        <begin position="182"/>
        <end position="184"/>
    </location>
</feature>
<feature type="helix" evidence="2">
    <location>
        <begin position="186"/>
        <end position="192"/>
    </location>
</feature>
<feature type="helix" evidence="2">
    <location>
        <begin position="199"/>
        <end position="207"/>
    </location>
</feature>
<feature type="strand" evidence="2">
    <location>
        <begin position="212"/>
        <end position="215"/>
    </location>
</feature>
<feature type="helix" evidence="2">
    <location>
        <begin position="222"/>
        <end position="227"/>
    </location>
</feature>
<feature type="strand" evidence="2">
    <location>
        <begin position="233"/>
        <end position="236"/>
    </location>
</feature>
<comment type="function">
    <text evidence="1">Catalyzes the reversible phosphorylation of UMP to UDP.</text>
</comment>
<comment type="catalytic activity">
    <reaction evidence="1">
        <text>UMP + ATP = UDP + ADP</text>
        <dbReference type="Rhea" id="RHEA:24400"/>
        <dbReference type="ChEBI" id="CHEBI:30616"/>
        <dbReference type="ChEBI" id="CHEBI:57865"/>
        <dbReference type="ChEBI" id="CHEBI:58223"/>
        <dbReference type="ChEBI" id="CHEBI:456216"/>
        <dbReference type="EC" id="2.7.4.22"/>
    </reaction>
</comment>
<comment type="activity regulation">
    <text evidence="1">Inhibited by UTP.</text>
</comment>
<comment type="pathway">
    <text evidence="1">Pyrimidine metabolism; CTP biosynthesis via de novo pathway; UDP from UMP (UMPK route): step 1/1.</text>
</comment>
<comment type="subunit">
    <text evidence="1">Homohexamer.</text>
</comment>
<comment type="subcellular location">
    <subcellularLocation>
        <location evidence="1">Cytoplasm</location>
    </subcellularLocation>
</comment>
<comment type="similarity">
    <text evidence="1">Belongs to the UMP kinase family.</text>
</comment>